<reference key="1">
    <citation type="journal article" date="2005" name="Nucleic Acids Res.">
        <title>The genome sequence of Salmonella enterica serovar Choleraesuis, a highly invasive and resistant zoonotic pathogen.</title>
        <authorList>
            <person name="Chiu C.-H."/>
            <person name="Tang P."/>
            <person name="Chu C."/>
            <person name="Hu S."/>
            <person name="Bao Q."/>
            <person name="Yu J."/>
            <person name="Chou Y.-Y."/>
            <person name="Wang H.-S."/>
            <person name="Lee Y.-S."/>
        </authorList>
    </citation>
    <scope>NUCLEOTIDE SEQUENCE [LARGE SCALE GENOMIC DNA]</scope>
    <source>
        <strain>SC-B67</strain>
    </source>
</reference>
<comment type="function">
    <text evidence="1">Divalent metal cation transporter which exports Zn(2+), Cd(2+) and possibly Fe(2+). May be involved in zinc and iron detoxification by efflux.</text>
</comment>
<comment type="catalytic activity">
    <reaction evidence="1">
        <text>Zn(2+)(in) + H(+)(out) = Zn(2+)(out) + H(+)(in)</text>
        <dbReference type="Rhea" id="RHEA:28839"/>
        <dbReference type="ChEBI" id="CHEBI:15378"/>
        <dbReference type="ChEBI" id="CHEBI:29105"/>
    </reaction>
</comment>
<comment type="catalytic activity">
    <reaction evidence="1">
        <text>Cd(2+)(in) + H(+)(out) = Cd(2+)(out) + H(+)(in)</text>
        <dbReference type="Rhea" id="RHEA:28739"/>
        <dbReference type="ChEBI" id="CHEBI:15378"/>
        <dbReference type="ChEBI" id="CHEBI:48775"/>
    </reaction>
</comment>
<comment type="catalytic activity">
    <reaction evidence="1">
        <text>Fe(2+)(in) + H(+)(out) = Fe(2+)(out) + H(+)(in)</text>
        <dbReference type="Rhea" id="RHEA:29439"/>
        <dbReference type="ChEBI" id="CHEBI:15378"/>
        <dbReference type="ChEBI" id="CHEBI:29033"/>
    </reaction>
</comment>
<comment type="subunit">
    <text evidence="1">Homodimer.</text>
</comment>
<comment type="subcellular location">
    <subcellularLocation>
        <location evidence="1">Cell inner membrane</location>
        <topology evidence="1">Multi-pass membrane protein</topology>
    </subcellularLocation>
</comment>
<comment type="similarity">
    <text evidence="1">Belongs to the cation diffusion facilitator (CDF) transporter (TC 2.A.4) family. FieF subfamily.</text>
</comment>
<accession>Q57HF4</accession>
<gene>
    <name evidence="1" type="primary">fieF</name>
    <name type="ordered locus">SCH_3952</name>
</gene>
<sequence>MNQTYGRLVSRASIAATAMASALLLIKIFAWWYTGSVSILAALVDSLVDIAASLTNLLVVRYSLQPADDEHTFGHGKAESLAALAQSMFISGSALFLFLTSIQNLIKPTPMNDPGVGIGVTVIALICTIILVTFQRWVVRKTQSQAVRADMLHYQSDVMMNGAILIALGLSWYGWHRADALFALGIGIYILYSALRMGYEAVQSLLDRALPDAERQEIIDIVTSWPGVSGAHDLRTRQSGPTRFIQIHLEMEDNLPLVQAHFVADQVEQAILQRFPGSDVIIHQDPCSVVPREGRKFELV</sequence>
<dbReference type="EMBL" id="AE017220">
    <property type="protein sequence ID" value="AAX67858.1"/>
    <property type="molecule type" value="Genomic_DNA"/>
</dbReference>
<dbReference type="RefSeq" id="WP_001541240.1">
    <property type="nucleotide sequence ID" value="NC_006905.1"/>
</dbReference>
<dbReference type="SMR" id="Q57HF4"/>
<dbReference type="KEGG" id="sec:SCH_3952"/>
<dbReference type="HOGENOM" id="CLU_013430_3_0_6"/>
<dbReference type="Proteomes" id="UP000000538">
    <property type="component" value="Chromosome"/>
</dbReference>
<dbReference type="GO" id="GO:0005886">
    <property type="term" value="C:plasma membrane"/>
    <property type="evidence" value="ECO:0007669"/>
    <property type="project" value="UniProtKB-SubCell"/>
</dbReference>
<dbReference type="GO" id="GO:0015086">
    <property type="term" value="F:cadmium ion transmembrane transporter activity"/>
    <property type="evidence" value="ECO:0007669"/>
    <property type="project" value="UniProtKB-UniRule"/>
</dbReference>
<dbReference type="GO" id="GO:0015093">
    <property type="term" value="F:ferrous iron transmembrane transporter activity"/>
    <property type="evidence" value="ECO:0007669"/>
    <property type="project" value="TreeGrafter"/>
</dbReference>
<dbReference type="GO" id="GO:0046872">
    <property type="term" value="F:metal ion binding"/>
    <property type="evidence" value="ECO:0007669"/>
    <property type="project" value="UniProtKB-KW"/>
</dbReference>
<dbReference type="GO" id="GO:0015341">
    <property type="term" value="F:zinc efflux antiporter activity"/>
    <property type="evidence" value="ECO:0007669"/>
    <property type="project" value="TreeGrafter"/>
</dbReference>
<dbReference type="GO" id="GO:0006882">
    <property type="term" value="P:intracellular zinc ion homeostasis"/>
    <property type="evidence" value="ECO:0007669"/>
    <property type="project" value="TreeGrafter"/>
</dbReference>
<dbReference type="FunFam" id="1.20.1510.10:FF:000001">
    <property type="entry name" value="Ferrous-iron efflux pump FieF"/>
    <property type="match status" value="1"/>
</dbReference>
<dbReference type="FunFam" id="3.30.70.1350:FF:000002">
    <property type="entry name" value="Ferrous-iron efflux pump FieF"/>
    <property type="match status" value="1"/>
</dbReference>
<dbReference type="Gene3D" id="1.20.1510.10">
    <property type="entry name" value="Cation efflux protein transmembrane domain"/>
    <property type="match status" value="1"/>
</dbReference>
<dbReference type="Gene3D" id="3.30.70.1350">
    <property type="entry name" value="Cation efflux protein, cytoplasmic domain"/>
    <property type="match status" value="1"/>
</dbReference>
<dbReference type="HAMAP" id="MF_01425">
    <property type="entry name" value="Cation_efflux_FieF"/>
    <property type="match status" value="1"/>
</dbReference>
<dbReference type="InterPro" id="IPR002524">
    <property type="entry name" value="Cation_efflux"/>
</dbReference>
<dbReference type="InterPro" id="IPR027470">
    <property type="entry name" value="Cation_efflux_CTD"/>
</dbReference>
<dbReference type="InterPro" id="IPR036837">
    <property type="entry name" value="Cation_efflux_CTD_sf"/>
</dbReference>
<dbReference type="InterPro" id="IPR023783">
    <property type="entry name" value="Cation_efflux_FieF"/>
</dbReference>
<dbReference type="InterPro" id="IPR027469">
    <property type="entry name" value="Cation_efflux_TMD_sf"/>
</dbReference>
<dbReference type="InterPro" id="IPR050291">
    <property type="entry name" value="CDF_Transporter"/>
</dbReference>
<dbReference type="NCBIfam" id="TIGR01297">
    <property type="entry name" value="CDF"/>
    <property type="match status" value="1"/>
</dbReference>
<dbReference type="NCBIfam" id="NF007064">
    <property type="entry name" value="PRK09509.1"/>
    <property type="match status" value="1"/>
</dbReference>
<dbReference type="PANTHER" id="PTHR43840:SF41">
    <property type="entry name" value="CATION-EFFLUX PUMP FIEF"/>
    <property type="match status" value="1"/>
</dbReference>
<dbReference type="PANTHER" id="PTHR43840">
    <property type="entry name" value="MITOCHONDRIAL METAL TRANSPORTER 1-RELATED"/>
    <property type="match status" value="1"/>
</dbReference>
<dbReference type="Pfam" id="PF01545">
    <property type="entry name" value="Cation_efflux"/>
    <property type="match status" value="1"/>
</dbReference>
<dbReference type="Pfam" id="PF16916">
    <property type="entry name" value="ZT_dimer"/>
    <property type="match status" value="1"/>
</dbReference>
<dbReference type="SUPFAM" id="SSF160240">
    <property type="entry name" value="Cation efflux protein cytoplasmic domain-like"/>
    <property type="match status" value="1"/>
</dbReference>
<dbReference type="SUPFAM" id="SSF161111">
    <property type="entry name" value="Cation efflux protein transmembrane domain-like"/>
    <property type="match status" value="1"/>
</dbReference>
<keyword id="KW-0997">Cell inner membrane</keyword>
<keyword id="KW-1003">Cell membrane</keyword>
<keyword id="KW-0406">Ion transport</keyword>
<keyword id="KW-0408">Iron</keyword>
<keyword id="KW-0410">Iron transport</keyword>
<keyword id="KW-0472">Membrane</keyword>
<keyword id="KW-0479">Metal-binding</keyword>
<keyword id="KW-0812">Transmembrane</keyword>
<keyword id="KW-1133">Transmembrane helix</keyword>
<keyword id="KW-0813">Transport</keyword>
<keyword id="KW-0862">Zinc</keyword>
<keyword id="KW-0864">Zinc transport</keyword>
<feature type="chain" id="PRO_1000024327" description="Cation-efflux pump FieF">
    <location>
        <begin position="1"/>
        <end position="300"/>
    </location>
</feature>
<feature type="transmembrane region" description="Helical" evidence="1">
    <location>
        <begin position="24"/>
        <end position="44"/>
    </location>
</feature>
<feature type="transmembrane region" description="Helical" evidence="1">
    <location>
        <begin position="82"/>
        <end position="102"/>
    </location>
</feature>
<feature type="transmembrane region" description="Helical" evidence="1">
    <location>
        <begin position="114"/>
        <end position="134"/>
    </location>
</feature>
<feature type="transmembrane region" description="Helical" evidence="1">
    <location>
        <begin position="156"/>
        <end position="176"/>
    </location>
</feature>
<feature type="transmembrane region" description="Helical" evidence="1">
    <location>
        <begin position="178"/>
        <end position="198"/>
    </location>
</feature>
<feature type="binding site" evidence="1">
    <location>
        <position position="45"/>
    </location>
    <ligand>
        <name>Zn(2+)</name>
        <dbReference type="ChEBI" id="CHEBI:29105"/>
    </ligand>
</feature>
<feature type="binding site" evidence="1">
    <location>
        <position position="49"/>
    </location>
    <ligand>
        <name>Zn(2+)</name>
        <dbReference type="ChEBI" id="CHEBI:29105"/>
    </ligand>
</feature>
<feature type="binding site" evidence="1">
    <location>
        <position position="153"/>
    </location>
    <ligand>
        <name>Zn(2+)</name>
        <dbReference type="ChEBI" id="CHEBI:29105"/>
    </ligand>
</feature>
<feature type="binding site" evidence="1">
    <location>
        <position position="157"/>
    </location>
    <ligand>
        <name>Zn(2+)</name>
        <dbReference type="ChEBI" id="CHEBI:29105"/>
    </ligand>
</feature>
<evidence type="ECO:0000255" key="1">
    <source>
        <dbReference type="HAMAP-Rule" id="MF_01425"/>
    </source>
</evidence>
<name>FIEF_SALCH</name>
<proteinExistence type="inferred from homology"/>
<organism>
    <name type="scientific">Salmonella choleraesuis (strain SC-B67)</name>
    <dbReference type="NCBI Taxonomy" id="321314"/>
    <lineage>
        <taxon>Bacteria</taxon>
        <taxon>Pseudomonadati</taxon>
        <taxon>Pseudomonadota</taxon>
        <taxon>Gammaproteobacteria</taxon>
        <taxon>Enterobacterales</taxon>
        <taxon>Enterobacteriaceae</taxon>
        <taxon>Salmonella</taxon>
    </lineage>
</organism>
<protein>
    <recommendedName>
        <fullName evidence="1">Cation-efflux pump FieF</fullName>
    </recommendedName>
</protein>